<gene>
    <name evidence="1" type="primary">rplS</name>
    <name type="ordered locus">CLD_2196</name>
</gene>
<dbReference type="EMBL" id="CP000939">
    <property type="protein sequence ID" value="ACA43610.1"/>
    <property type="molecule type" value="Genomic_DNA"/>
</dbReference>
<dbReference type="RefSeq" id="WP_003362586.1">
    <property type="nucleotide sequence ID" value="NC_010516.1"/>
</dbReference>
<dbReference type="SMR" id="B1II75"/>
<dbReference type="GeneID" id="5186699"/>
<dbReference type="KEGG" id="cbb:CLD_2196"/>
<dbReference type="HOGENOM" id="CLU_103507_2_2_9"/>
<dbReference type="Proteomes" id="UP000008541">
    <property type="component" value="Chromosome"/>
</dbReference>
<dbReference type="GO" id="GO:0022625">
    <property type="term" value="C:cytosolic large ribosomal subunit"/>
    <property type="evidence" value="ECO:0007669"/>
    <property type="project" value="TreeGrafter"/>
</dbReference>
<dbReference type="GO" id="GO:0003735">
    <property type="term" value="F:structural constituent of ribosome"/>
    <property type="evidence" value="ECO:0007669"/>
    <property type="project" value="InterPro"/>
</dbReference>
<dbReference type="GO" id="GO:0006412">
    <property type="term" value="P:translation"/>
    <property type="evidence" value="ECO:0007669"/>
    <property type="project" value="UniProtKB-UniRule"/>
</dbReference>
<dbReference type="FunFam" id="2.30.30.790:FF:000009">
    <property type="entry name" value="50S ribosomal protein L19"/>
    <property type="match status" value="1"/>
</dbReference>
<dbReference type="Gene3D" id="2.30.30.790">
    <property type="match status" value="1"/>
</dbReference>
<dbReference type="HAMAP" id="MF_00402">
    <property type="entry name" value="Ribosomal_bL19"/>
    <property type="match status" value="1"/>
</dbReference>
<dbReference type="InterPro" id="IPR001857">
    <property type="entry name" value="Ribosomal_bL19"/>
</dbReference>
<dbReference type="InterPro" id="IPR018257">
    <property type="entry name" value="Ribosomal_bL19_CS"/>
</dbReference>
<dbReference type="InterPro" id="IPR038657">
    <property type="entry name" value="Ribosomal_bL19_sf"/>
</dbReference>
<dbReference type="InterPro" id="IPR008991">
    <property type="entry name" value="Translation_prot_SH3-like_sf"/>
</dbReference>
<dbReference type="NCBIfam" id="TIGR01024">
    <property type="entry name" value="rplS_bact"/>
    <property type="match status" value="1"/>
</dbReference>
<dbReference type="PANTHER" id="PTHR15680:SF9">
    <property type="entry name" value="LARGE RIBOSOMAL SUBUNIT PROTEIN BL19M"/>
    <property type="match status" value="1"/>
</dbReference>
<dbReference type="PANTHER" id="PTHR15680">
    <property type="entry name" value="RIBOSOMAL PROTEIN L19"/>
    <property type="match status" value="1"/>
</dbReference>
<dbReference type="Pfam" id="PF01245">
    <property type="entry name" value="Ribosomal_L19"/>
    <property type="match status" value="1"/>
</dbReference>
<dbReference type="PIRSF" id="PIRSF002191">
    <property type="entry name" value="Ribosomal_L19"/>
    <property type="match status" value="1"/>
</dbReference>
<dbReference type="PRINTS" id="PR00061">
    <property type="entry name" value="RIBOSOMALL19"/>
</dbReference>
<dbReference type="SUPFAM" id="SSF50104">
    <property type="entry name" value="Translation proteins SH3-like domain"/>
    <property type="match status" value="1"/>
</dbReference>
<dbReference type="PROSITE" id="PS01015">
    <property type="entry name" value="RIBOSOMAL_L19"/>
    <property type="match status" value="1"/>
</dbReference>
<name>RL19_CLOBK</name>
<feature type="chain" id="PRO_1000193813" description="Large ribosomal subunit protein bL19">
    <location>
        <begin position="1"/>
        <end position="114"/>
    </location>
</feature>
<sequence>MLEVIKAIEAEQVRSDLPEFNVGDTVKVHQKIKEGTRERVQVFEGTVLKRQNGGARETFTVRRVAYNVAVEKTFPVNSPLIEKIQVVRKGKVRRAKLYYLRDRVGKAAKVKERI</sequence>
<organism>
    <name type="scientific">Clostridium botulinum (strain Okra / Type B1)</name>
    <dbReference type="NCBI Taxonomy" id="498213"/>
    <lineage>
        <taxon>Bacteria</taxon>
        <taxon>Bacillati</taxon>
        <taxon>Bacillota</taxon>
        <taxon>Clostridia</taxon>
        <taxon>Eubacteriales</taxon>
        <taxon>Clostridiaceae</taxon>
        <taxon>Clostridium</taxon>
    </lineage>
</organism>
<keyword id="KW-0687">Ribonucleoprotein</keyword>
<keyword id="KW-0689">Ribosomal protein</keyword>
<comment type="function">
    <text evidence="1">This protein is located at the 30S-50S ribosomal subunit interface and may play a role in the structure and function of the aminoacyl-tRNA binding site.</text>
</comment>
<comment type="similarity">
    <text evidence="1">Belongs to the bacterial ribosomal protein bL19 family.</text>
</comment>
<protein>
    <recommendedName>
        <fullName evidence="1">Large ribosomal subunit protein bL19</fullName>
    </recommendedName>
    <alternativeName>
        <fullName evidence="2">50S ribosomal protein L19</fullName>
    </alternativeName>
</protein>
<accession>B1II75</accession>
<reference key="1">
    <citation type="journal article" date="2007" name="PLoS ONE">
        <title>Analysis of the neurotoxin complex genes in Clostridium botulinum A1-A4 and B1 strains: BoNT/A3, /Ba4 and /B1 clusters are located within plasmids.</title>
        <authorList>
            <person name="Smith T.J."/>
            <person name="Hill K.K."/>
            <person name="Foley B.T."/>
            <person name="Detter J.C."/>
            <person name="Munk A.C."/>
            <person name="Bruce D.C."/>
            <person name="Doggett N.A."/>
            <person name="Smith L.A."/>
            <person name="Marks J.D."/>
            <person name="Xie G."/>
            <person name="Brettin T.S."/>
        </authorList>
    </citation>
    <scope>NUCLEOTIDE SEQUENCE [LARGE SCALE GENOMIC DNA]</scope>
    <source>
        <strain>Okra / Type B1</strain>
    </source>
</reference>
<proteinExistence type="inferred from homology"/>
<evidence type="ECO:0000255" key="1">
    <source>
        <dbReference type="HAMAP-Rule" id="MF_00402"/>
    </source>
</evidence>
<evidence type="ECO:0000305" key="2"/>